<sequence length="233" mass="26939">MPPKAAKGKRRPNGASIEVAGVLGGGASRLKKKIRDIERLLKKDKLPADVRTENERAVKALKVELQNTQFNLKAKQVAKKYHMVRFFEKKKAVRKLKQANKNLEDISKTDVRKDIKKARKQVKHCEIDLAYVIMFPKSEKYISLYPNPKENDEVDVSNPKAKKGMQMTEQRRREFRKEIEQLIENNRLPFTIGEVLQGKTVKIEFEGQNVAADHEIDAPEPKNNQQEEDDFFE</sequence>
<organism>
    <name type="scientific">Scheffersomyces stipitis (strain ATCC 58785 / CBS 6054 / NBRC 10063 / NRRL Y-11545)</name>
    <name type="common">Yeast</name>
    <name type="synonym">Pichia stipitis</name>
    <dbReference type="NCBI Taxonomy" id="322104"/>
    <lineage>
        <taxon>Eukaryota</taxon>
        <taxon>Fungi</taxon>
        <taxon>Dikarya</taxon>
        <taxon>Ascomycota</taxon>
        <taxon>Saccharomycotina</taxon>
        <taxon>Pichiomycetes</taxon>
        <taxon>Debaryomycetaceae</taxon>
        <taxon>Scheffersomyces</taxon>
    </lineage>
</organism>
<dbReference type="EMBL" id="CP000496">
    <property type="protein sequence ID" value="ABN64371.1"/>
    <property type="molecule type" value="Genomic_DNA"/>
</dbReference>
<dbReference type="RefSeq" id="XP_001382400.1">
    <property type="nucleotide sequence ID" value="XM_001382363.1"/>
</dbReference>
<dbReference type="SMR" id="A3LNR4"/>
<dbReference type="FunCoup" id="A3LNR4">
    <property type="interactions" value="179"/>
</dbReference>
<dbReference type="STRING" id="322104.A3LNR4"/>
<dbReference type="GeneID" id="4836790"/>
<dbReference type="KEGG" id="pic:PICST_40337"/>
<dbReference type="eggNOG" id="KOG4484">
    <property type="taxonomic scope" value="Eukaryota"/>
</dbReference>
<dbReference type="HOGENOM" id="CLU_066912_2_0_1"/>
<dbReference type="InParanoid" id="A3LNR4"/>
<dbReference type="OMA" id="KPHRIQE"/>
<dbReference type="OrthoDB" id="47732at2759"/>
<dbReference type="Proteomes" id="UP000002258">
    <property type="component" value="Chromosome 2"/>
</dbReference>
<dbReference type="GO" id="GO:0005730">
    <property type="term" value="C:nucleolus"/>
    <property type="evidence" value="ECO:0007669"/>
    <property type="project" value="UniProtKB-SubCell"/>
</dbReference>
<dbReference type="GO" id="GO:0030688">
    <property type="term" value="C:preribosome, small subunit precursor"/>
    <property type="evidence" value="ECO:0007669"/>
    <property type="project" value="TreeGrafter"/>
</dbReference>
<dbReference type="GO" id="GO:0000462">
    <property type="term" value="P:maturation of SSU-rRNA from tricistronic rRNA transcript (SSU-rRNA, 5.8S rRNA, LSU-rRNA)"/>
    <property type="evidence" value="ECO:0007669"/>
    <property type="project" value="TreeGrafter"/>
</dbReference>
<dbReference type="InterPro" id="IPR019310">
    <property type="entry name" value="Efg1"/>
</dbReference>
<dbReference type="InterPro" id="IPR050786">
    <property type="entry name" value="EFG1_rRNA-proc"/>
</dbReference>
<dbReference type="PANTHER" id="PTHR33911">
    <property type="entry name" value="RRNA-PROCESSING PROTEIN EFG1"/>
    <property type="match status" value="1"/>
</dbReference>
<dbReference type="PANTHER" id="PTHR33911:SF1">
    <property type="entry name" value="RRNA-PROCESSING PROTEIN EFG1"/>
    <property type="match status" value="1"/>
</dbReference>
<dbReference type="Pfam" id="PF10153">
    <property type="entry name" value="Efg1"/>
    <property type="match status" value="1"/>
</dbReference>
<evidence type="ECO:0000250" key="1"/>
<evidence type="ECO:0000255" key="2"/>
<evidence type="ECO:0000256" key="3">
    <source>
        <dbReference type="SAM" id="MobiDB-lite"/>
    </source>
</evidence>
<evidence type="ECO:0000305" key="4"/>
<name>EFG1P_PICST</name>
<gene>
    <name type="primary">EFG1</name>
    <name type="ORF">PICST_40337</name>
</gene>
<reference key="1">
    <citation type="journal article" date="2007" name="Nat. Biotechnol.">
        <title>Genome sequence of the lignocellulose-bioconverting and xylose-fermenting yeast Pichia stipitis.</title>
        <authorList>
            <person name="Jeffries T.W."/>
            <person name="Grigoriev I.V."/>
            <person name="Grimwood J."/>
            <person name="Laplaza J.M."/>
            <person name="Aerts A."/>
            <person name="Salamov A."/>
            <person name="Schmutz J."/>
            <person name="Lindquist E."/>
            <person name="Dehal P."/>
            <person name="Shapiro H."/>
            <person name="Jin Y.-S."/>
            <person name="Passoth V."/>
            <person name="Richardson P.M."/>
        </authorList>
    </citation>
    <scope>NUCLEOTIDE SEQUENCE [LARGE SCALE GENOMIC DNA]</scope>
    <source>
        <strain>ATCC 58785 / CBS 6054 / NBRC 10063 / NRRL Y-11545</strain>
    </source>
</reference>
<feature type="chain" id="PRO_0000330280" description="rRNA-processing protein EFG1">
    <location>
        <begin position="1"/>
        <end position="233"/>
    </location>
</feature>
<feature type="region of interest" description="Disordered" evidence="3">
    <location>
        <begin position="150"/>
        <end position="169"/>
    </location>
</feature>
<feature type="region of interest" description="Disordered" evidence="3">
    <location>
        <begin position="210"/>
        <end position="233"/>
    </location>
</feature>
<feature type="coiled-coil region" evidence="2">
    <location>
        <begin position="53"/>
        <end position="130"/>
    </location>
</feature>
<feature type="coiled-coil region" evidence="2">
    <location>
        <begin position="160"/>
        <end position="188"/>
    </location>
</feature>
<accession>A3LNR4</accession>
<comment type="function">
    <text evidence="1">Involved in rRNA processing.</text>
</comment>
<comment type="subcellular location">
    <subcellularLocation>
        <location evidence="1">Nucleus</location>
        <location evidence="1">Nucleolus</location>
    </subcellularLocation>
</comment>
<comment type="similarity">
    <text evidence="4">Belongs to the EFG1 family.</text>
</comment>
<proteinExistence type="inferred from homology"/>
<protein>
    <recommendedName>
        <fullName>rRNA-processing protein EFG1</fullName>
    </recommendedName>
</protein>
<keyword id="KW-0175">Coiled coil</keyword>
<keyword id="KW-0539">Nucleus</keyword>
<keyword id="KW-1185">Reference proteome</keyword>
<keyword id="KW-0698">rRNA processing</keyword>